<gene>
    <name evidence="1" type="primary">rplY</name>
    <name evidence="1" type="synonym">ctc</name>
    <name type="ordered locus">Csac_1812</name>
</gene>
<reference key="1">
    <citation type="submission" date="2007-04" db="EMBL/GenBank/DDBJ databases">
        <title>Genome sequence of the thermophilic hydrogen-producing bacterium Caldicellulosiruptor saccharolyticus DSM 8903.</title>
        <authorList>
            <person name="Copeland A."/>
            <person name="Lucas S."/>
            <person name="Lapidus A."/>
            <person name="Barry K."/>
            <person name="Detter J.C."/>
            <person name="Glavina del Rio T."/>
            <person name="Hammon N."/>
            <person name="Israni S."/>
            <person name="Dalin E."/>
            <person name="Tice H."/>
            <person name="Pitluck S."/>
            <person name="Kiss H."/>
            <person name="Brettin T."/>
            <person name="Bruce D."/>
            <person name="Han C."/>
            <person name="Schmutz J."/>
            <person name="Larimer F."/>
            <person name="Land M."/>
            <person name="Hauser L."/>
            <person name="Kyrpides N."/>
            <person name="Lykidis A."/>
            <person name="van de Werken H.J.G."/>
            <person name="Verhaart M.R.A."/>
            <person name="VanFossen A.L."/>
            <person name="Lewis D.L."/>
            <person name="Nichols J.D."/>
            <person name="Goorissen H.P."/>
            <person name="van Niel E.W.J."/>
            <person name="Stams F.J.M."/>
            <person name="Willquist K.U."/>
            <person name="Ward D.E."/>
            <person name="van der Oost J."/>
            <person name="Kelly R.M."/>
            <person name="Kengen S.M.W."/>
            <person name="Richardson P."/>
        </authorList>
    </citation>
    <scope>NUCLEOTIDE SEQUENCE [LARGE SCALE GENOMIC DNA]</scope>
    <source>
        <strain>ATCC 43494 / DSM 8903 / Tp8T 6331</strain>
    </source>
</reference>
<organism>
    <name type="scientific">Caldicellulosiruptor saccharolyticus (strain ATCC 43494 / DSM 8903 / Tp8T 6331)</name>
    <dbReference type="NCBI Taxonomy" id="351627"/>
    <lineage>
        <taxon>Bacteria</taxon>
        <taxon>Bacillati</taxon>
        <taxon>Bacillota</taxon>
        <taxon>Bacillota incertae sedis</taxon>
        <taxon>Caldicellulosiruptorales</taxon>
        <taxon>Caldicellulosiruptoraceae</taxon>
        <taxon>Caldicellulosiruptor</taxon>
    </lineage>
</organism>
<proteinExistence type="inferred from homology"/>
<name>RL25_CALS8</name>
<evidence type="ECO:0000255" key="1">
    <source>
        <dbReference type="HAMAP-Rule" id="MF_01334"/>
    </source>
</evidence>
<evidence type="ECO:0000256" key="2">
    <source>
        <dbReference type="SAM" id="MobiDB-lite"/>
    </source>
</evidence>
<evidence type="ECO:0000305" key="3"/>
<keyword id="KW-0687">Ribonucleoprotein</keyword>
<keyword id="KW-0689">Ribosomal protein</keyword>
<keyword id="KW-0694">RNA-binding</keyword>
<keyword id="KW-0699">rRNA-binding</keyword>
<accession>A4XKG2</accession>
<protein>
    <recommendedName>
        <fullName evidence="1">Large ribosomal subunit protein bL25</fullName>
    </recommendedName>
    <alternativeName>
        <fullName evidence="3">50S ribosomal protein L25</fullName>
    </alternativeName>
    <alternativeName>
        <fullName evidence="1">General stress protein CTC</fullName>
    </alternativeName>
</protein>
<feature type="chain" id="PRO_1000052878" description="Large ribosomal subunit protein bL25">
    <location>
        <begin position="1"/>
        <end position="203"/>
    </location>
</feature>
<feature type="region of interest" description="Disordered" evidence="2">
    <location>
        <begin position="182"/>
        <end position="203"/>
    </location>
</feature>
<comment type="function">
    <text evidence="1">This is one of the proteins that binds to the 5S RNA in the ribosome where it forms part of the central protuberance.</text>
</comment>
<comment type="subunit">
    <text evidence="1">Part of the 50S ribosomal subunit; part of the 5S rRNA/L5/L18/L25 subcomplex. Contacts the 5S rRNA. Binds to the 5S rRNA independently of L5 and L18.</text>
</comment>
<comment type="similarity">
    <text evidence="1">Belongs to the bacterial ribosomal protein bL25 family. CTC subfamily.</text>
</comment>
<dbReference type="EMBL" id="CP000679">
    <property type="protein sequence ID" value="ABP67397.1"/>
    <property type="molecule type" value="Genomic_DNA"/>
</dbReference>
<dbReference type="RefSeq" id="WP_011917331.1">
    <property type="nucleotide sequence ID" value="NC_009437.1"/>
</dbReference>
<dbReference type="SMR" id="A4XKG2"/>
<dbReference type="STRING" id="351627.Csac_1812"/>
<dbReference type="KEGG" id="csc:Csac_1812"/>
<dbReference type="eggNOG" id="COG1825">
    <property type="taxonomic scope" value="Bacteria"/>
</dbReference>
<dbReference type="HOGENOM" id="CLU_075939_2_1_9"/>
<dbReference type="OrthoDB" id="9790002at2"/>
<dbReference type="Proteomes" id="UP000000256">
    <property type="component" value="Chromosome"/>
</dbReference>
<dbReference type="GO" id="GO:0022625">
    <property type="term" value="C:cytosolic large ribosomal subunit"/>
    <property type="evidence" value="ECO:0007669"/>
    <property type="project" value="TreeGrafter"/>
</dbReference>
<dbReference type="GO" id="GO:0008097">
    <property type="term" value="F:5S rRNA binding"/>
    <property type="evidence" value="ECO:0007669"/>
    <property type="project" value="InterPro"/>
</dbReference>
<dbReference type="GO" id="GO:0003735">
    <property type="term" value="F:structural constituent of ribosome"/>
    <property type="evidence" value="ECO:0007669"/>
    <property type="project" value="InterPro"/>
</dbReference>
<dbReference type="GO" id="GO:0006412">
    <property type="term" value="P:translation"/>
    <property type="evidence" value="ECO:0007669"/>
    <property type="project" value="UniProtKB-UniRule"/>
</dbReference>
<dbReference type="CDD" id="cd00495">
    <property type="entry name" value="Ribosomal_L25_TL5_CTC"/>
    <property type="match status" value="1"/>
</dbReference>
<dbReference type="Gene3D" id="2.170.120.20">
    <property type="entry name" value="Ribosomal protein L25, beta domain"/>
    <property type="match status" value="1"/>
</dbReference>
<dbReference type="Gene3D" id="2.40.240.10">
    <property type="entry name" value="Ribosomal Protein L25, Chain P"/>
    <property type="match status" value="1"/>
</dbReference>
<dbReference type="HAMAP" id="MF_01334">
    <property type="entry name" value="Ribosomal_bL25_CTC"/>
    <property type="match status" value="1"/>
</dbReference>
<dbReference type="InterPro" id="IPR020056">
    <property type="entry name" value="Rbsml_bL25/Gln-tRNA_synth_N"/>
</dbReference>
<dbReference type="InterPro" id="IPR011035">
    <property type="entry name" value="Ribosomal_bL25/Gln-tRNA_synth"/>
</dbReference>
<dbReference type="InterPro" id="IPR020057">
    <property type="entry name" value="Ribosomal_bL25_b-dom"/>
</dbReference>
<dbReference type="InterPro" id="IPR037121">
    <property type="entry name" value="Ribosomal_bL25_C"/>
</dbReference>
<dbReference type="InterPro" id="IPR001021">
    <property type="entry name" value="Ribosomal_bL25_long"/>
</dbReference>
<dbReference type="InterPro" id="IPR029751">
    <property type="entry name" value="Ribosomal_L25_dom"/>
</dbReference>
<dbReference type="InterPro" id="IPR020930">
    <property type="entry name" value="Ribosomal_uL5_bac-type"/>
</dbReference>
<dbReference type="NCBIfam" id="TIGR00731">
    <property type="entry name" value="bL25_bact_ctc"/>
    <property type="match status" value="1"/>
</dbReference>
<dbReference type="NCBIfam" id="NF004142">
    <property type="entry name" value="PRK05618.4-5"/>
    <property type="match status" value="1"/>
</dbReference>
<dbReference type="PANTHER" id="PTHR33284">
    <property type="entry name" value="RIBOSOMAL PROTEIN L25/GLN-TRNA SYNTHETASE, ANTI-CODON-BINDING DOMAIN-CONTAINING PROTEIN"/>
    <property type="match status" value="1"/>
</dbReference>
<dbReference type="PANTHER" id="PTHR33284:SF1">
    <property type="entry name" value="RIBOSOMAL PROTEIN L25_GLN-TRNA SYNTHETASE, ANTI-CODON-BINDING DOMAIN-CONTAINING PROTEIN"/>
    <property type="match status" value="1"/>
</dbReference>
<dbReference type="Pfam" id="PF01386">
    <property type="entry name" value="Ribosomal_L25p"/>
    <property type="match status" value="1"/>
</dbReference>
<dbReference type="Pfam" id="PF14693">
    <property type="entry name" value="Ribosomal_TL5_C"/>
    <property type="match status" value="1"/>
</dbReference>
<dbReference type="SUPFAM" id="SSF50715">
    <property type="entry name" value="Ribosomal protein L25-like"/>
    <property type="match status" value="1"/>
</dbReference>
<sequence>MEPVLVYNKRETFTKSNLNKLRKEGYIPAVAYGDDIKSLPGYVSKKEFEKLYKQKGLAGKIKILIDGKERTALIKEVQTHYVKGNIIHVDFQILSENKPIYVEVPIVFENAEILKSRGLVLQRQIDTVEIEGLPKDIPEHLVIDLMEYEKPTAIKLRDIKLPEGIKITEDLDEVVAVIDVSEITEEPETEEKKEEGASSVSNS</sequence>